<protein>
    <recommendedName>
        <fullName evidence="1">6,7-dimethyl-8-ribityllumazine synthase</fullName>
        <shortName evidence="1">DMRL synthase</shortName>
        <shortName evidence="1">LS</shortName>
        <shortName evidence="1">Lumazine synthase</shortName>
        <ecNumber evidence="1">2.5.1.78</ecNumber>
    </recommendedName>
</protein>
<organism>
    <name type="scientific">Actinobacillus pleuropneumoniae serotype 5b (strain L20)</name>
    <dbReference type="NCBI Taxonomy" id="416269"/>
    <lineage>
        <taxon>Bacteria</taxon>
        <taxon>Pseudomonadati</taxon>
        <taxon>Pseudomonadota</taxon>
        <taxon>Gammaproteobacteria</taxon>
        <taxon>Pasteurellales</taxon>
        <taxon>Pasteurellaceae</taxon>
        <taxon>Actinobacillus</taxon>
    </lineage>
</organism>
<proteinExistence type="inferred from homology"/>
<gene>
    <name evidence="1" type="primary">ribH</name>
    <name type="ordered locus">APL_0385</name>
</gene>
<accession>A3MZA3</accession>
<comment type="function">
    <text evidence="1">Catalyzes the formation of 6,7-dimethyl-8-ribityllumazine by condensation of 5-amino-6-(D-ribitylamino)uracil with 3,4-dihydroxy-2-butanone 4-phosphate. This is the penultimate step in the biosynthesis of riboflavin.</text>
</comment>
<comment type="catalytic activity">
    <reaction evidence="1">
        <text>(2S)-2-hydroxy-3-oxobutyl phosphate + 5-amino-6-(D-ribitylamino)uracil = 6,7-dimethyl-8-(1-D-ribityl)lumazine + phosphate + 2 H2O + H(+)</text>
        <dbReference type="Rhea" id="RHEA:26152"/>
        <dbReference type="ChEBI" id="CHEBI:15377"/>
        <dbReference type="ChEBI" id="CHEBI:15378"/>
        <dbReference type="ChEBI" id="CHEBI:15934"/>
        <dbReference type="ChEBI" id="CHEBI:43474"/>
        <dbReference type="ChEBI" id="CHEBI:58201"/>
        <dbReference type="ChEBI" id="CHEBI:58830"/>
        <dbReference type="EC" id="2.5.1.78"/>
    </reaction>
</comment>
<comment type="pathway">
    <text evidence="1">Cofactor biosynthesis; riboflavin biosynthesis; riboflavin from 2-hydroxy-3-oxobutyl phosphate and 5-amino-6-(D-ribitylamino)uracil: step 1/2.</text>
</comment>
<comment type="subunit">
    <text evidence="1">Forms an icosahedral capsid composed of 60 subunits, arranged as a dodecamer of pentamers.</text>
</comment>
<comment type="similarity">
    <text evidence="1">Belongs to the DMRL synthase family.</text>
</comment>
<dbReference type="EC" id="2.5.1.78" evidence="1"/>
<dbReference type="EMBL" id="CP000569">
    <property type="protein sequence ID" value="ABN73489.1"/>
    <property type="molecule type" value="Genomic_DNA"/>
</dbReference>
<dbReference type="RefSeq" id="WP_011848365.1">
    <property type="nucleotide sequence ID" value="NC_009053.1"/>
</dbReference>
<dbReference type="SMR" id="A3MZA3"/>
<dbReference type="STRING" id="416269.APL_0385"/>
<dbReference type="EnsemblBacteria" id="ABN73489">
    <property type="protein sequence ID" value="ABN73489"/>
    <property type="gene ID" value="APL_0385"/>
</dbReference>
<dbReference type="KEGG" id="apl:APL_0385"/>
<dbReference type="PATRIC" id="fig|416269.6.peg.397"/>
<dbReference type="eggNOG" id="COG0054">
    <property type="taxonomic scope" value="Bacteria"/>
</dbReference>
<dbReference type="HOGENOM" id="CLU_089358_1_1_6"/>
<dbReference type="UniPathway" id="UPA00275">
    <property type="reaction ID" value="UER00404"/>
</dbReference>
<dbReference type="Proteomes" id="UP000001432">
    <property type="component" value="Chromosome"/>
</dbReference>
<dbReference type="GO" id="GO:0005829">
    <property type="term" value="C:cytosol"/>
    <property type="evidence" value="ECO:0007669"/>
    <property type="project" value="TreeGrafter"/>
</dbReference>
<dbReference type="GO" id="GO:0009349">
    <property type="term" value="C:riboflavin synthase complex"/>
    <property type="evidence" value="ECO:0007669"/>
    <property type="project" value="InterPro"/>
</dbReference>
<dbReference type="GO" id="GO:0000906">
    <property type="term" value="F:6,7-dimethyl-8-ribityllumazine synthase activity"/>
    <property type="evidence" value="ECO:0007669"/>
    <property type="project" value="UniProtKB-UniRule"/>
</dbReference>
<dbReference type="GO" id="GO:0009231">
    <property type="term" value="P:riboflavin biosynthetic process"/>
    <property type="evidence" value="ECO:0007669"/>
    <property type="project" value="UniProtKB-UniRule"/>
</dbReference>
<dbReference type="CDD" id="cd09209">
    <property type="entry name" value="Lumazine_synthase-I"/>
    <property type="match status" value="1"/>
</dbReference>
<dbReference type="FunFam" id="3.40.50.960:FF:000001">
    <property type="entry name" value="6,7-dimethyl-8-ribityllumazine synthase"/>
    <property type="match status" value="1"/>
</dbReference>
<dbReference type="Gene3D" id="3.40.50.960">
    <property type="entry name" value="Lumazine/riboflavin synthase"/>
    <property type="match status" value="1"/>
</dbReference>
<dbReference type="HAMAP" id="MF_00178">
    <property type="entry name" value="Lumazine_synth"/>
    <property type="match status" value="1"/>
</dbReference>
<dbReference type="InterPro" id="IPR034964">
    <property type="entry name" value="LS"/>
</dbReference>
<dbReference type="InterPro" id="IPR002180">
    <property type="entry name" value="LS/RS"/>
</dbReference>
<dbReference type="InterPro" id="IPR036467">
    <property type="entry name" value="LS/RS_sf"/>
</dbReference>
<dbReference type="NCBIfam" id="TIGR00114">
    <property type="entry name" value="lumazine-synth"/>
    <property type="match status" value="1"/>
</dbReference>
<dbReference type="NCBIfam" id="NF000812">
    <property type="entry name" value="PRK00061.1-4"/>
    <property type="match status" value="1"/>
</dbReference>
<dbReference type="PANTHER" id="PTHR21058:SF0">
    <property type="entry name" value="6,7-DIMETHYL-8-RIBITYLLUMAZINE SYNTHASE"/>
    <property type="match status" value="1"/>
</dbReference>
<dbReference type="PANTHER" id="PTHR21058">
    <property type="entry name" value="6,7-DIMETHYL-8-RIBITYLLUMAZINE SYNTHASE DMRL SYNTHASE LUMAZINE SYNTHASE"/>
    <property type="match status" value="1"/>
</dbReference>
<dbReference type="Pfam" id="PF00885">
    <property type="entry name" value="DMRL_synthase"/>
    <property type="match status" value="1"/>
</dbReference>
<dbReference type="SUPFAM" id="SSF52121">
    <property type="entry name" value="Lumazine synthase"/>
    <property type="match status" value="1"/>
</dbReference>
<feature type="chain" id="PRO_1000040359" description="6,7-dimethyl-8-ribityllumazine synthase">
    <location>
        <begin position="1"/>
        <end position="153"/>
    </location>
</feature>
<feature type="active site" description="Proton donor" evidence="1">
    <location>
        <position position="88"/>
    </location>
</feature>
<feature type="binding site" evidence="1">
    <location>
        <position position="22"/>
    </location>
    <ligand>
        <name>5-amino-6-(D-ribitylamino)uracil</name>
        <dbReference type="ChEBI" id="CHEBI:15934"/>
    </ligand>
</feature>
<feature type="binding site" evidence="1">
    <location>
        <begin position="56"/>
        <end position="58"/>
    </location>
    <ligand>
        <name>5-amino-6-(D-ribitylamino)uracil</name>
        <dbReference type="ChEBI" id="CHEBI:15934"/>
    </ligand>
</feature>
<feature type="binding site" evidence="1">
    <location>
        <begin position="80"/>
        <end position="82"/>
    </location>
    <ligand>
        <name>5-amino-6-(D-ribitylamino)uracil</name>
        <dbReference type="ChEBI" id="CHEBI:15934"/>
    </ligand>
</feature>
<feature type="binding site" evidence="1">
    <location>
        <begin position="85"/>
        <end position="86"/>
    </location>
    <ligand>
        <name>(2S)-2-hydroxy-3-oxobutyl phosphate</name>
        <dbReference type="ChEBI" id="CHEBI:58830"/>
    </ligand>
</feature>
<feature type="binding site" evidence="1">
    <location>
        <position position="113"/>
    </location>
    <ligand>
        <name>5-amino-6-(D-ribitylamino)uracil</name>
        <dbReference type="ChEBI" id="CHEBI:15934"/>
    </ligand>
</feature>
<feature type="binding site" evidence="1">
    <location>
        <position position="127"/>
    </location>
    <ligand>
        <name>(2S)-2-hydroxy-3-oxobutyl phosphate</name>
        <dbReference type="ChEBI" id="CHEBI:58830"/>
    </ligand>
</feature>
<evidence type="ECO:0000255" key="1">
    <source>
        <dbReference type="HAMAP-Rule" id="MF_00178"/>
    </source>
</evidence>
<reference key="1">
    <citation type="journal article" date="2008" name="J. Bacteriol.">
        <title>The complete genome sequence of Actinobacillus pleuropneumoniae L20 (serotype 5b).</title>
        <authorList>
            <person name="Foote S.J."/>
            <person name="Bosse J.T."/>
            <person name="Bouevitch A.B."/>
            <person name="Langford P.R."/>
            <person name="Young N.M."/>
            <person name="Nash J.H.E."/>
        </authorList>
    </citation>
    <scope>NUCLEOTIDE SEQUENCE [LARGE SCALE GENOMIC DNA]</scope>
    <source>
        <strain>L20</strain>
    </source>
</reference>
<keyword id="KW-1185">Reference proteome</keyword>
<keyword id="KW-0686">Riboflavin biosynthesis</keyword>
<keyword id="KW-0808">Transferase</keyword>
<name>RISB_ACTP2</name>
<sequence length="153" mass="15960">MAKITGNLVATGLKFGIVTARFNDFINDKLLSGAIDTLVRHGAYENDIDTAWVPGAFEIPLVAKKMATSGKYDAVICLGTVISGSTTHYDYVCNEAAKGIGAVALETGVPVIFGVLTTENIEQAIERAGTKAGNKGSECALGAIEIVNVLKAI</sequence>